<name>FMR1_PODAS</name>
<protein>
    <recommendedName>
        <fullName>Mat- sexual cell fertilization-promoting factor</fullName>
    </recommendedName>
</protein>
<proteinExistence type="inferred from homology"/>
<gene>
    <name type="primary">FMR1</name>
</gene>
<feature type="chain" id="PRO_0000206021" description="Mat- sexual cell fertilization-promoting factor">
    <location>
        <begin position="1"/>
        <end position="305"/>
    </location>
</feature>
<feature type="DNA-binding region" description="Alpha box" evidence="1">
    <location>
        <begin position="38"/>
        <end position="93"/>
    </location>
</feature>
<dbReference type="EMBL" id="X64194">
    <property type="protein sequence ID" value="CAA45519.1"/>
    <property type="molecule type" value="Genomic_DNA"/>
</dbReference>
<dbReference type="PIR" id="S19797">
    <property type="entry name" value="S19797"/>
</dbReference>
<dbReference type="GO" id="GO:0005634">
    <property type="term" value="C:nucleus"/>
    <property type="evidence" value="ECO:0007669"/>
    <property type="project" value="UniProtKB-SubCell"/>
</dbReference>
<dbReference type="GO" id="GO:0008301">
    <property type="term" value="F:DNA binding, bending"/>
    <property type="evidence" value="ECO:0007669"/>
    <property type="project" value="InterPro"/>
</dbReference>
<dbReference type="GO" id="GO:0045895">
    <property type="term" value="P:positive regulation of mating-type specific transcription, DNA-templated"/>
    <property type="evidence" value="ECO:0007669"/>
    <property type="project" value="InterPro"/>
</dbReference>
<dbReference type="GO" id="GO:0007338">
    <property type="term" value="P:single fertilization"/>
    <property type="evidence" value="ECO:0007669"/>
    <property type="project" value="UniProtKB-KW"/>
</dbReference>
<dbReference type="InterPro" id="IPR006856">
    <property type="entry name" value="MATalpha_HMGbox"/>
</dbReference>
<dbReference type="Pfam" id="PF04769">
    <property type="entry name" value="MATalpha_HMGbox"/>
    <property type="match status" value="1"/>
</dbReference>
<dbReference type="PROSITE" id="PS51325">
    <property type="entry name" value="ALPHA_BOX"/>
    <property type="match status" value="1"/>
</dbReference>
<sequence length="305" mass="34169">MAGINSILQTFEGLGEGDRAETIKVLSDMMREGTPRQPAKKKVNGFMGYRSYYSSMFSQLPQKERSPILTTLWQQDPFHKEWDFMCAVYSAIRDQLAEQNVTLQTWIQFAVTPLGIAPRTGYMEALGWVLTRLDDGTHTLQRMDVPDIRYHLQPMNGLGLFLSCLNGGLPIFDPQNIISQLSDPAFDVICINTQVPKIPGTFDTMSGFRQLAKQNPALAMSSLFQLPDTDPLIAQGVGMYEFHSVVSQPVQNHGMPPTTVPPMESHSHEDNMDFAKINEAELDAILTMYDTNTNGYIDPNKPQGF</sequence>
<evidence type="ECO:0000255" key="1">
    <source>
        <dbReference type="PROSITE-ProRule" id="PRU00655"/>
    </source>
</evidence>
<keyword id="KW-0238">DNA-binding</keyword>
<keyword id="KW-0278">Fertilization</keyword>
<keyword id="KW-0539">Nucleus</keyword>
<keyword id="KW-0804">Transcription</keyword>
<keyword id="KW-0805">Transcription regulation</keyword>
<comment type="function">
    <text>Controls fertilization, probably by determining the mating type. May be involved in the post-fertilization steps of the sexual cycle besides mat+. It is required for the developmental events that occur in the female organ after fertilization.</text>
</comment>
<comment type="subcellular location">
    <subcellularLocation>
        <location evidence="1">Nucleus</location>
    </subcellularLocation>
</comment>
<comment type="similarity">
    <text evidence="1">Belongs to the MATALPHA1 family.</text>
</comment>
<organism>
    <name type="scientific">Podospora anserina</name>
    <name type="common">Pleurage anserina</name>
    <dbReference type="NCBI Taxonomy" id="2587412"/>
    <lineage>
        <taxon>Eukaryota</taxon>
        <taxon>Fungi</taxon>
        <taxon>Dikarya</taxon>
        <taxon>Ascomycota</taxon>
        <taxon>Pezizomycotina</taxon>
        <taxon>Sordariomycetes</taxon>
        <taxon>Sordariomycetidae</taxon>
        <taxon>Sordariales</taxon>
        <taxon>Podosporaceae</taxon>
        <taxon>Podospora</taxon>
    </lineage>
</organism>
<reference key="1">
    <citation type="journal article" date="1992" name="Mol. Gen. Genet.">
        <title>The mating types of Podospora anserina: functional analysis and sequence of the fertilization domains.</title>
        <authorList>
            <person name="Debuchy R."/>
            <person name="Coppin E."/>
        </authorList>
    </citation>
    <scope>NUCLEOTIDE SEQUENCE [GENOMIC DNA]</scope>
</reference>
<accession>P35692</accession>